<name>PKSC_STRCO</name>
<keyword id="KW-0067">ATP-binding</keyword>
<keyword id="KW-0418">Kinase</keyword>
<keyword id="KW-0547">Nucleotide-binding</keyword>
<keyword id="KW-1185">Reference proteome</keyword>
<keyword id="KW-0723">Serine/threonine-protein kinase</keyword>
<keyword id="KW-0808">Transferase</keyword>
<gene>
    <name type="primary">pksC</name>
    <name type="ordered locus">SCO3821</name>
    <name type="ORF">SCGD3.22</name>
</gene>
<protein>
    <recommendedName>
        <fullName>Serine/threonine-protein kinase PksC</fullName>
        <ecNumber>2.7.11.1</ecNumber>
    </recommendedName>
</protein>
<evidence type="ECO:0000255" key="1">
    <source>
        <dbReference type="PROSITE-ProRule" id="PRU00159"/>
    </source>
</evidence>
<evidence type="ECO:0000255" key="2">
    <source>
        <dbReference type="PROSITE-ProRule" id="PRU00528"/>
    </source>
</evidence>
<evidence type="ECO:0000255" key="3">
    <source>
        <dbReference type="PROSITE-ProRule" id="PRU10027"/>
    </source>
</evidence>
<evidence type="ECO:0000256" key="4">
    <source>
        <dbReference type="SAM" id="MobiDB-lite"/>
    </source>
</evidence>
<evidence type="ECO:0000305" key="5"/>
<sequence length="556" mass="58262">MSQDGGQGRYAGRALAGGRYQLRDLLGEGGMASVHLAYDSVLDRQVAIKTLHTELGREQAFRERFRREAQAVAKLTHTNIVSVFDTGEDDLDGMTTPYIVMEYVEGRPLGSVLDEDVRQQGAMPADKALKITADVLAALEISHEMGLVHRDIKPGNVMMTKRGVVKVMDFGIARAMQSGVTSMTQTGMVVGTPQYLSPEQALGRGVDARSDLYSVGIMLFQLVTGRLPFDADSPLAIAYAHVQEQPVAPSAVNRALPPAVDALVARALKKNPNERFPSAEAMRDECLRVAASFQAAPPSIVPGAQTSSGAGVGSAVFPPVGQGTPAPTGPVQTPYQPTPSPGPNPYGTPAPAAHSPAYGYPQQAGYQTPAPAPYAQQQAAATPPPYNLTPSAQGSGSGSPGGKSNKPVIIGSIVVAVVAVGGLIGALLMNGGGDEDPEAGGGGSSTASVSASPSKAAGYRGPDKEKTIEKDKCTEPQESYNDPDKIQVPDFTFKYIGSVKECFNAAGWQMKVVEVDENTYGEGSVRDQFPTAGTDVDPENMPEIQLKVSTGNPPSE</sequence>
<reference key="1">
    <citation type="submission" date="1998-09" db="EMBL/GenBank/DDBJ databases">
        <title>Cloning, nucleotide sequence and expression of a serine/threonine protein kinase gene from Streptomyces coelicolor.</title>
        <authorList>
            <person name="Bakal C.J."/>
            <person name="Davies J.E."/>
        </authorList>
    </citation>
    <scope>NUCLEOTIDE SEQUENCE [GENOMIC DNA]</scope>
    <source>
        <strain>A3(2) / NRRL B-16638</strain>
    </source>
</reference>
<reference key="2">
    <citation type="journal article" date="2002" name="Nature">
        <title>Complete genome sequence of the model actinomycete Streptomyces coelicolor A3(2).</title>
        <authorList>
            <person name="Bentley S.D."/>
            <person name="Chater K.F."/>
            <person name="Cerdeno-Tarraga A.-M."/>
            <person name="Challis G.L."/>
            <person name="Thomson N.R."/>
            <person name="James K.D."/>
            <person name="Harris D.E."/>
            <person name="Quail M.A."/>
            <person name="Kieser H."/>
            <person name="Harper D."/>
            <person name="Bateman A."/>
            <person name="Brown S."/>
            <person name="Chandra G."/>
            <person name="Chen C.W."/>
            <person name="Collins M."/>
            <person name="Cronin A."/>
            <person name="Fraser A."/>
            <person name="Goble A."/>
            <person name="Hidalgo J."/>
            <person name="Hornsby T."/>
            <person name="Howarth S."/>
            <person name="Huang C.-H."/>
            <person name="Kieser T."/>
            <person name="Larke L."/>
            <person name="Murphy L.D."/>
            <person name="Oliver K."/>
            <person name="O'Neil S."/>
            <person name="Rabbinowitsch E."/>
            <person name="Rajandream M.A."/>
            <person name="Rutherford K.M."/>
            <person name="Rutter S."/>
            <person name="Seeger K."/>
            <person name="Saunders D."/>
            <person name="Sharp S."/>
            <person name="Squares R."/>
            <person name="Squares S."/>
            <person name="Taylor K."/>
            <person name="Warren T."/>
            <person name="Wietzorrek A."/>
            <person name="Woodward J.R."/>
            <person name="Barrell B.G."/>
            <person name="Parkhill J."/>
            <person name="Hopwood D.A."/>
        </authorList>
    </citation>
    <scope>NUCLEOTIDE SEQUENCE [LARGE SCALE GENOMIC DNA]</scope>
    <source>
        <strain>ATCC BAA-471 / A3(2) / M145</strain>
    </source>
</reference>
<organism>
    <name type="scientific">Streptomyces coelicolor (strain ATCC BAA-471 / A3(2) / M145)</name>
    <dbReference type="NCBI Taxonomy" id="100226"/>
    <lineage>
        <taxon>Bacteria</taxon>
        <taxon>Bacillati</taxon>
        <taxon>Actinomycetota</taxon>
        <taxon>Actinomycetes</taxon>
        <taxon>Kitasatosporales</taxon>
        <taxon>Streptomycetaceae</taxon>
        <taxon>Streptomyces</taxon>
        <taxon>Streptomyces albidoflavus group</taxon>
    </lineage>
</organism>
<dbReference type="EC" id="2.7.11.1"/>
<dbReference type="EMBL" id="AF094711">
    <property type="protein sequence ID" value="AAC64406.1"/>
    <property type="molecule type" value="Genomic_DNA"/>
</dbReference>
<dbReference type="EMBL" id="AL939117">
    <property type="protein sequence ID" value="CAB46944.1"/>
    <property type="molecule type" value="Genomic_DNA"/>
</dbReference>
<dbReference type="PIR" id="T36502">
    <property type="entry name" value="T36502"/>
</dbReference>
<dbReference type="PIR" id="T42100">
    <property type="entry name" value="T42100"/>
</dbReference>
<dbReference type="RefSeq" id="NP_628010.1">
    <property type="nucleotide sequence ID" value="NC_003888.3"/>
</dbReference>
<dbReference type="RefSeq" id="WP_011029251.1">
    <property type="nucleotide sequence ID" value="NZ_VNID01000003.1"/>
</dbReference>
<dbReference type="SMR" id="Q9S2C0"/>
<dbReference type="FunCoup" id="Q9S2C0">
    <property type="interactions" value="87"/>
</dbReference>
<dbReference type="STRING" id="100226.gene:17761445"/>
<dbReference type="PaxDb" id="100226-SCO3821"/>
<dbReference type="DNASU" id="1099257"/>
<dbReference type="KEGG" id="sco:SCO3821"/>
<dbReference type="PATRIC" id="fig|100226.15.peg.3889"/>
<dbReference type="eggNOG" id="COG0515">
    <property type="taxonomic scope" value="Bacteria"/>
</dbReference>
<dbReference type="HOGENOM" id="CLU_000288_135_2_11"/>
<dbReference type="InParanoid" id="Q9S2C0"/>
<dbReference type="OrthoDB" id="9762169at2"/>
<dbReference type="PhylomeDB" id="Q9S2C0"/>
<dbReference type="Proteomes" id="UP000001973">
    <property type="component" value="Chromosome"/>
</dbReference>
<dbReference type="GO" id="GO:0005524">
    <property type="term" value="F:ATP binding"/>
    <property type="evidence" value="ECO:0007669"/>
    <property type="project" value="UniProtKB-KW"/>
</dbReference>
<dbReference type="GO" id="GO:0106310">
    <property type="term" value="F:protein serine kinase activity"/>
    <property type="evidence" value="ECO:0007669"/>
    <property type="project" value="RHEA"/>
</dbReference>
<dbReference type="GO" id="GO:0004674">
    <property type="term" value="F:protein serine/threonine kinase activity"/>
    <property type="evidence" value="ECO:0000318"/>
    <property type="project" value="GO_Central"/>
</dbReference>
<dbReference type="CDD" id="cd06577">
    <property type="entry name" value="PASTA_pknB"/>
    <property type="match status" value="1"/>
</dbReference>
<dbReference type="CDD" id="cd14014">
    <property type="entry name" value="STKc_PknB_like"/>
    <property type="match status" value="1"/>
</dbReference>
<dbReference type="FunFam" id="1.10.510.10:FF:000021">
    <property type="entry name" value="Serine/threonine protein kinase"/>
    <property type="match status" value="1"/>
</dbReference>
<dbReference type="FunFam" id="3.30.200.20:FF:000035">
    <property type="entry name" value="Serine/threonine protein kinase Stk1"/>
    <property type="match status" value="1"/>
</dbReference>
<dbReference type="Gene3D" id="3.30.10.20">
    <property type="match status" value="1"/>
</dbReference>
<dbReference type="Gene3D" id="3.30.200.20">
    <property type="entry name" value="Phosphorylase Kinase, domain 1"/>
    <property type="match status" value="1"/>
</dbReference>
<dbReference type="Gene3D" id="1.10.510.10">
    <property type="entry name" value="Transferase(Phosphotransferase) domain 1"/>
    <property type="match status" value="1"/>
</dbReference>
<dbReference type="InterPro" id="IPR011009">
    <property type="entry name" value="Kinase-like_dom_sf"/>
</dbReference>
<dbReference type="InterPro" id="IPR005543">
    <property type="entry name" value="PASTA_dom"/>
</dbReference>
<dbReference type="InterPro" id="IPR000719">
    <property type="entry name" value="Prot_kinase_dom"/>
</dbReference>
<dbReference type="InterPro" id="IPR017441">
    <property type="entry name" value="Protein_kinase_ATP_BS"/>
</dbReference>
<dbReference type="InterPro" id="IPR008271">
    <property type="entry name" value="Ser/Thr_kinase_AS"/>
</dbReference>
<dbReference type="PANTHER" id="PTHR43289">
    <property type="entry name" value="MITOGEN-ACTIVATED PROTEIN KINASE KINASE KINASE 20-RELATED"/>
    <property type="match status" value="1"/>
</dbReference>
<dbReference type="PANTHER" id="PTHR43289:SF34">
    <property type="entry name" value="SERINE_THREONINE-PROTEIN KINASE YBDM-RELATED"/>
    <property type="match status" value="1"/>
</dbReference>
<dbReference type="Pfam" id="PF03793">
    <property type="entry name" value="PASTA"/>
    <property type="match status" value="1"/>
</dbReference>
<dbReference type="Pfam" id="PF00069">
    <property type="entry name" value="Pkinase"/>
    <property type="match status" value="1"/>
</dbReference>
<dbReference type="SMART" id="SM00740">
    <property type="entry name" value="PASTA"/>
    <property type="match status" value="1"/>
</dbReference>
<dbReference type="SMART" id="SM00220">
    <property type="entry name" value="S_TKc"/>
    <property type="match status" value="1"/>
</dbReference>
<dbReference type="SUPFAM" id="SSF56112">
    <property type="entry name" value="Protein kinase-like (PK-like)"/>
    <property type="match status" value="1"/>
</dbReference>
<dbReference type="PROSITE" id="PS51178">
    <property type="entry name" value="PASTA"/>
    <property type="match status" value="1"/>
</dbReference>
<dbReference type="PROSITE" id="PS00107">
    <property type="entry name" value="PROTEIN_KINASE_ATP"/>
    <property type="match status" value="1"/>
</dbReference>
<dbReference type="PROSITE" id="PS50011">
    <property type="entry name" value="PROTEIN_KINASE_DOM"/>
    <property type="match status" value="1"/>
</dbReference>
<dbReference type="PROSITE" id="PS00108">
    <property type="entry name" value="PROTEIN_KINASE_ST"/>
    <property type="match status" value="1"/>
</dbReference>
<proteinExistence type="inferred from homology"/>
<accession>Q9S2C0</accession>
<accession>Q9ZFS8</accession>
<feature type="chain" id="PRO_0000171236" description="Serine/threonine-protein kinase PksC">
    <location>
        <begin position="1"/>
        <end position="556"/>
    </location>
</feature>
<feature type="domain" description="Protein kinase" evidence="1">
    <location>
        <begin position="20"/>
        <end position="287"/>
    </location>
</feature>
<feature type="domain" description="PASTA" evidence="2">
    <location>
        <begin position="482"/>
        <end position="550"/>
    </location>
</feature>
<feature type="region of interest" description="Disordered" evidence="4">
    <location>
        <begin position="300"/>
        <end position="403"/>
    </location>
</feature>
<feature type="region of interest" description="Disordered" evidence="4">
    <location>
        <begin position="435"/>
        <end position="485"/>
    </location>
</feature>
<feature type="compositionally biased region" description="Pro residues" evidence="4">
    <location>
        <begin position="336"/>
        <end position="348"/>
    </location>
</feature>
<feature type="compositionally biased region" description="Low complexity" evidence="4">
    <location>
        <begin position="360"/>
        <end position="381"/>
    </location>
</feature>
<feature type="compositionally biased region" description="Low complexity" evidence="4">
    <location>
        <begin position="445"/>
        <end position="458"/>
    </location>
</feature>
<feature type="compositionally biased region" description="Basic and acidic residues" evidence="4">
    <location>
        <begin position="461"/>
        <end position="475"/>
    </location>
</feature>
<feature type="active site" description="Proton acceptor" evidence="1 3">
    <location>
        <position position="151"/>
    </location>
</feature>
<feature type="binding site" evidence="1">
    <location>
        <begin position="26"/>
        <end position="34"/>
    </location>
    <ligand>
        <name>ATP</name>
        <dbReference type="ChEBI" id="CHEBI:30616"/>
    </ligand>
</feature>
<feature type="binding site" evidence="1">
    <location>
        <position position="49"/>
    </location>
    <ligand>
        <name>ATP</name>
        <dbReference type="ChEBI" id="CHEBI:30616"/>
    </ligand>
</feature>
<feature type="sequence conflict" description="In Ref. 1; AAC64406." evidence="5" ref="1">
    <original>I</original>
    <variation>M</variation>
    <location>
        <position position="80"/>
    </location>
</feature>
<feature type="sequence conflict" description="In Ref. 1; AAC64406." evidence="5" ref="1">
    <original>I</original>
    <variation>L</variation>
    <location>
        <position position="99"/>
    </location>
</feature>
<feature type="sequence conflict" description="In Ref. 1; AAC64406." evidence="5" ref="1">
    <original>G</original>
    <variation>C</variation>
    <location>
        <position position="110"/>
    </location>
</feature>
<feature type="sequence conflict" description="In Ref. 1; AAC64406." evidence="5" ref="1">
    <original>L</original>
    <variation>V</variation>
    <location>
        <position position="147"/>
    </location>
</feature>
<feature type="sequence conflict" description="In Ref. 1; AAC64406." evidence="5" ref="1">
    <original>P</original>
    <variation>L</variation>
    <location>
        <position position="339"/>
    </location>
</feature>
<comment type="catalytic activity">
    <reaction>
        <text>L-seryl-[protein] + ATP = O-phospho-L-seryl-[protein] + ADP + H(+)</text>
        <dbReference type="Rhea" id="RHEA:17989"/>
        <dbReference type="Rhea" id="RHEA-COMP:9863"/>
        <dbReference type="Rhea" id="RHEA-COMP:11604"/>
        <dbReference type="ChEBI" id="CHEBI:15378"/>
        <dbReference type="ChEBI" id="CHEBI:29999"/>
        <dbReference type="ChEBI" id="CHEBI:30616"/>
        <dbReference type="ChEBI" id="CHEBI:83421"/>
        <dbReference type="ChEBI" id="CHEBI:456216"/>
        <dbReference type="EC" id="2.7.11.1"/>
    </reaction>
</comment>
<comment type="catalytic activity">
    <reaction>
        <text>L-threonyl-[protein] + ATP = O-phospho-L-threonyl-[protein] + ADP + H(+)</text>
        <dbReference type="Rhea" id="RHEA:46608"/>
        <dbReference type="Rhea" id="RHEA-COMP:11060"/>
        <dbReference type="Rhea" id="RHEA-COMP:11605"/>
        <dbReference type="ChEBI" id="CHEBI:15378"/>
        <dbReference type="ChEBI" id="CHEBI:30013"/>
        <dbReference type="ChEBI" id="CHEBI:30616"/>
        <dbReference type="ChEBI" id="CHEBI:61977"/>
        <dbReference type="ChEBI" id="CHEBI:456216"/>
        <dbReference type="EC" id="2.7.11.1"/>
    </reaction>
</comment>
<comment type="similarity">
    <text evidence="1">Belongs to the protein kinase superfamily. Ser/Thr protein kinase family.</text>
</comment>